<protein>
    <recommendedName>
        <fullName>Serine/threonine-protein kinase ISR1</fullName>
        <ecNumber>2.7.11.1</ecNumber>
    </recommendedName>
    <alternativeName>
        <fullName>Inhibition of staurosporine resistance protein 1</fullName>
    </alternativeName>
</protein>
<accession>Q06098</accession>
<accession>D6W4A4</accession>
<gene>
    <name type="primary">ISR1</name>
    <name type="ordered locus">YPR106W</name>
</gene>
<proteinExistence type="evidence at protein level"/>
<comment type="function">
    <text evidence="4">Probable serine/threonine protein kinase which may function redundantly with MPK1-independent branch of the PCK1 pathway that is presumed to be required for the tolerance to high temperatures and staurosporine.</text>
</comment>
<comment type="catalytic activity">
    <reaction>
        <text>L-seryl-[protein] + ATP = O-phospho-L-seryl-[protein] + ADP + H(+)</text>
        <dbReference type="Rhea" id="RHEA:17989"/>
        <dbReference type="Rhea" id="RHEA-COMP:9863"/>
        <dbReference type="Rhea" id="RHEA-COMP:11604"/>
        <dbReference type="ChEBI" id="CHEBI:15378"/>
        <dbReference type="ChEBI" id="CHEBI:29999"/>
        <dbReference type="ChEBI" id="CHEBI:30616"/>
        <dbReference type="ChEBI" id="CHEBI:83421"/>
        <dbReference type="ChEBI" id="CHEBI:456216"/>
        <dbReference type="EC" id="2.7.11.1"/>
    </reaction>
</comment>
<comment type="catalytic activity">
    <reaction>
        <text>L-threonyl-[protein] + ATP = O-phospho-L-threonyl-[protein] + ADP + H(+)</text>
        <dbReference type="Rhea" id="RHEA:46608"/>
        <dbReference type="Rhea" id="RHEA-COMP:11060"/>
        <dbReference type="Rhea" id="RHEA-COMP:11605"/>
        <dbReference type="ChEBI" id="CHEBI:15378"/>
        <dbReference type="ChEBI" id="CHEBI:30013"/>
        <dbReference type="ChEBI" id="CHEBI:30616"/>
        <dbReference type="ChEBI" id="CHEBI:61977"/>
        <dbReference type="ChEBI" id="CHEBI:456216"/>
        <dbReference type="EC" id="2.7.11.1"/>
    </reaction>
</comment>
<comment type="miscellaneous">
    <text evidence="3">Present with 1590 molecules/cell in log phase SD medium.</text>
</comment>
<comment type="similarity">
    <text evidence="1">Belongs to the protein kinase superfamily. Ser/Thr protein kinase family.</text>
</comment>
<organism>
    <name type="scientific">Saccharomyces cerevisiae (strain ATCC 204508 / S288c)</name>
    <name type="common">Baker's yeast</name>
    <dbReference type="NCBI Taxonomy" id="559292"/>
    <lineage>
        <taxon>Eukaryota</taxon>
        <taxon>Fungi</taxon>
        <taxon>Dikarya</taxon>
        <taxon>Ascomycota</taxon>
        <taxon>Saccharomycotina</taxon>
        <taxon>Saccharomycetes</taxon>
        <taxon>Saccharomycetales</taxon>
        <taxon>Saccharomycetaceae</taxon>
        <taxon>Saccharomyces</taxon>
    </lineage>
</organism>
<dbReference type="EC" id="2.7.11.1"/>
<dbReference type="EMBL" id="U32445">
    <property type="protein sequence ID" value="AAB68076.1"/>
    <property type="molecule type" value="Genomic_DNA"/>
</dbReference>
<dbReference type="EMBL" id="BK006949">
    <property type="protein sequence ID" value="DAA11520.1"/>
    <property type="molecule type" value="Genomic_DNA"/>
</dbReference>
<dbReference type="PIR" id="S59771">
    <property type="entry name" value="S59771"/>
</dbReference>
<dbReference type="RefSeq" id="NP_015431.1">
    <property type="nucleotide sequence ID" value="NM_001184203.1"/>
</dbReference>
<dbReference type="SMR" id="Q06098"/>
<dbReference type="BioGRID" id="36272">
    <property type="interactions" value="156"/>
</dbReference>
<dbReference type="DIP" id="DIP-3818N"/>
<dbReference type="FunCoup" id="Q06098">
    <property type="interactions" value="377"/>
</dbReference>
<dbReference type="IntAct" id="Q06098">
    <property type="interactions" value="15"/>
</dbReference>
<dbReference type="MINT" id="Q06098"/>
<dbReference type="STRING" id="4932.YPR106W"/>
<dbReference type="iPTMnet" id="Q06098"/>
<dbReference type="PaxDb" id="4932-YPR106W"/>
<dbReference type="PeptideAtlas" id="Q06098"/>
<dbReference type="EnsemblFungi" id="YPR106W_mRNA">
    <property type="protein sequence ID" value="YPR106W"/>
    <property type="gene ID" value="YPR106W"/>
</dbReference>
<dbReference type="GeneID" id="856221"/>
<dbReference type="KEGG" id="sce:YPR106W"/>
<dbReference type="AGR" id="SGD:S000006310"/>
<dbReference type="SGD" id="S000006310">
    <property type="gene designation" value="ISR1"/>
</dbReference>
<dbReference type="VEuPathDB" id="FungiDB:YPR106W"/>
<dbReference type="eggNOG" id="ENOG502RW7G">
    <property type="taxonomic scope" value="Eukaryota"/>
</dbReference>
<dbReference type="HOGENOM" id="CLU_050275_0_0_1"/>
<dbReference type="InParanoid" id="Q06098"/>
<dbReference type="OMA" id="TSAFHIN"/>
<dbReference type="OrthoDB" id="1668230at2759"/>
<dbReference type="BioCyc" id="YEAST:G3O-34246-MONOMER"/>
<dbReference type="BioGRID-ORCS" id="856221">
    <property type="hits" value="1 hit in 13 CRISPR screens"/>
</dbReference>
<dbReference type="PRO" id="PR:Q06098"/>
<dbReference type="Proteomes" id="UP000002311">
    <property type="component" value="Chromosome XVI"/>
</dbReference>
<dbReference type="RNAct" id="Q06098">
    <property type="molecule type" value="protein"/>
</dbReference>
<dbReference type="GO" id="GO:0005524">
    <property type="term" value="F:ATP binding"/>
    <property type="evidence" value="ECO:0007669"/>
    <property type="project" value="UniProtKB-KW"/>
</dbReference>
<dbReference type="GO" id="GO:0004672">
    <property type="term" value="F:protein kinase activity"/>
    <property type="evidence" value="ECO:0000250"/>
    <property type="project" value="SGD"/>
</dbReference>
<dbReference type="GO" id="GO:0106310">
    <property type="term" value="F:protein serine kinase activity"/>
    <property type="evidence" value="ECO:0007669"/>
    <property type="project" value="RHEA"/>
</dbReference>
<dbReference type="GO" id="GO:0004674">
    <property type="term" value="F:protein serine/threonine kinase activity"/>
    <property type="evidence" value="ECO:0007669"/>
    <property type="project" value="UniProtKB-KW"/>
</dbReference>
<dbReference type="GO" id="GO:0106279">
    <property type="term" value="P:negative regulation of UDP-N-acetylglucosamine biosynthetic process"/>
    <property type="evidence" value="ECO:0000315"/>
    <property type="project" value="SGD"/>
</dbReference>
<dbReference type="FunFam" id="1.10.510.10:FF:001137">
    <property type="entry name" value="Isr1p"/>
    <property type="match status" value="1"/>
</dbReference>
<dbReference type="Gene3D" id="1.10.510.10">
    <property type="entry name" value="Transferase(Phosphotransferase) domain 1"/>
    <property type="match status" value="1"/>
</dbReference>
<dbReference type="InterPro" id="IPR011009">
    <property type="entry name" value="Kinase-like_dom_sf"/>
</dbReference>
<dbReference type="InterPro" id="IPR000719">
    <property type="entry name" value="Prot_kinase_dom"/>
</dbReference>
<dbReference type="InterPro" id="IPR017441">
    <property type="entry name" value="Protein_kinase_ATP_BS"/>
</dbReference>
<dbReference type="InterPro" id="IPR008271">
    <property type="entry name" value="Ser/Thr_kinase_AS"/>
</dbReference>
<dbReference type="InterPro" id="IPR053235">
    <property type="entry name" value="Ser_Thr_kinase"/>
</dbReference>
<dbReference type="PANTHER" id="PTHR24361">
    <property type="entry name" value="MITOGEN-ACTIVATED KINASE KINASE KINASE"/>
    <property type="match status" value="1"/>
</dbReference>
<dbReference type="Pfam" id="PF00069">
    <property type="entry name" value="Pkinase"/>
    <property type="match status" value="1"/>
</dbReference>
<dbReference type="SMART" id="SM00220">
    <property type="entry name" value="S_TKc"/>
    <property type="match status" value="1"/>
</dbReference>
<dbReference type="SUPFAM" id="SSF56112">
    <property type="entry name" value="Protein kinase-like (PK-like)"/>
    <property type="match status" value="1"/>
</dbReference>
<dbReference type="PROSITE" id="PS00107">
    <property type="entry name" value="PROTEIN_KINASE_ATP"/>
    <property type="match status" value="1"/>
</dbReference>
<dbReference type="PROSITE" id="PS50011">
    <property type="entry name" value="PROTEIN_KINASE_DOM"/>
    <property type="match status" value="1"/>
</dbReference>
<dbReference type="PROSITE" id="PS00108">
    <property type="entry name" value="PROTEIN_KINASE_ST"/>
    <property type="match status" value="1"/>
</dbReference>
<keyword id="KW-0067">ATP-binding</keyword>
<keyword id="KW-0418">Kinase</keyword>
<keyword id="KW-0547">Nucleotide-binding</keyword>
<keyword id="KW-1185">Reference proteome</keyword>
<keyword id="KW-0723">Serine/threonine-protein kinase</keyword>
<keyword id="KW-0808">Transferase</keyword>
<evidence type="ECO:0000255" key="1">
    <source>
        <dbReference type="PROSITE-ProRule" id="PRU00159"/>
    </source>
</evidence>
<evidence type="ECO:0000255" key="2">
    <source>
        <dbReference type="PROSITE-ProRule" id="PRU10027"/>
    </source>
</evidence>
<evidence type="ECO:0000269" key="3">
    <source>
    </source>
</evidence>
<evidence type="ECO:0000269" key="4">
    <source>
    </source>
</evidence>
<reference key="1">
    <citation type="journal article" date="1997" name="Nature">
        <title>The nucleotide sequence of Saccharomyces cerevisiae chromosome XVI.</title>
        <authorList>
            <person name="Bussey H."/>
            <person name="Storms R.K."/>
            <person name="Ahmed A."/>
            <person name="Albermann K."/>
            <person name="Allen E."/>
            <person name="Ansorge W."/>
            <person name="Araujo R."/>
            <person name="Aparicio A."/>
            <person name="Barrell B.G."/>
            <person name="Badcock K."/>
            <person name="Benes V."/>
            <person name="Botstein D."/>
            <person name="Bowman S."/>
            <person name="Brueckner M."/>
            <person name="Carpenter J."/>
            <person name="Cherry J.M."/>
            <person name="Chung E."/>
            <person name="Churcher C.M."/>
            <person name="Coster F."/>
            <person name="Davis K."/>
            <person name="Davis R.W."/>
            <person name="Dietrich F.S."/>
            <person name="Delius H."/>
            <person name="DiPaolo T."/>
            <person name="Dubois E."/>
            <person name="Duesterhoeft A."/>
            <person name="Duncan M."/>
            <person name="Floeth M."/>
            <person name="Fortin N."/>
            <person name="Friesen J.D."/>
            <person name="Fritz C."/>
            <person name="Goffeau A."/>
            <person name="Hall J."/>
            <person name="Hebling U."/>
            <person name="Heumann K."/>
            <person name="Hilbert H."/>
            <person name="Hillier L.W."/>
            <person name="Hunicke-Smith S."/>
            <person name="Hyman R.W."/>
            <person name="Johnston M."/>
            <person name="Kalman S."/>
            <person name="Kleine K."/>
            <person name="Komp C."/>
            <person name="Kurdi O."/>
            <person name="Lashkari D."/>
            <person name="Lew H."/>
            <person name="Lin A."/>
            <person name="Lin D."/>
            <person name="Louis E.J."/>
            <person name="Marathe R."/>
            <person name="Messenguy F."/>
            <person name="Mewes H.-W."/>
            <person name="Mirtipati S."/>
            <person name="Moestl D."/>
            <person name="Mueller-Auer S."/>
            <person name="Namath A."/>
            <person name="Nentwich U."/>
            <person name="Oefner P."/>
            <person name="Pearson D."/>
            <person name="Petel F.X."/>
            <person name="Pohl T.M."/>
            <person name="Purnelle B."/>
            <person name="Rajandream M.A."/>
            <person name="Rechmann S."/>
            <person name="Rieger M."/>
            <person name="Riles L."/>
            <person name="Roberts D."/>
            <person name="Schaefer M."/>
            <person name="Scharfe M."/>
            <person name="Scherens B."/>
            <person name="Schramm S."/>
            <person name="Schroeder M."/>
            <person name="Sdicu A.-M."/>
            <person name="Tettelin H."/>
            <person name="Urrestarazu L.A."/>
            <person name="Ushinsky S."/>
            <person name="Vierendeels F."/>
            <person name="Vissers S."/>
            <person name="Voss H."/>
            <person name="Walsh S.V."/>
            <person name="Wambutt R."/>
            <person name="Wang Y."/>
            <person name="Wedler E."/>
            <person name="Wedler H."/>
            <person name="Winnett E."/>
            <person name="Zhong W.-W."/>
            <person name="Zollner A."/>
            <person name="Vo D.H."/>
            <person name="Hani J."/>
        </authorList>
    </citation>
    <scope>NUCLEOTIDE SEQUENCE [LARGE SCALE GENOMIC DNA]</scope>
    <source>
        <strain>ATCC 204508 / S288c</strain>
    </source>
</reference>
<reference key="2">
    <citation type="journal article" date="2014" name="G3 (Bethesda)">
        <title>The reference genome sequence of Saccharomyces cerevisiae: Then and now.</title>
        <authorList>
            <person name="Engel S.R."/>
            <person name="Dietrich F.S."/>
            <person name="Fisk D.G."/>
            <person name="Binkley G."/>
            <person name="Balakrishnan R."/>
            <person name="Costanzo M.C."/>
            <person name="Dwight S.S."/>
            <person name="Hitz B.C."/>
            <person name="Karra K."/>
            <person name="Nash R.S."/>
            <person name="Weng S."/>
            <person name="Wong E.D."/>
            <person name="Lloyd P."/>
            <person name="Skrzypek M.S."/>
            <person name="Miyasato S.R."/>
            <person name="Simison M."/>
            <person name="Cherry J.M."/>
        </authorList>
    </citation>
    <scope>GENOME REANNOTATION</scope>
    <source>
        <strain>ATCC 204508 / S288c</strain>
    </source>
</reference>
<reference key="3">
    <citation type="journal article" date="1998" name="Biosci. Biotechnol. Biochem.">
        <title>Functional interaction of Isr1, a predicted protein kinase, with the Pkc1 pathway in Saccharomyces cerevisiae.</title>
        <authorList>
            <person name="Miyahara K."/>
            <person name="Hirata D."/>
            <person name="Miyakawa T."/>
        </authorList>
    </citation>
    <scope>FUNCTION</scope>
</reference>
<reference key="4">
    <citation type="journal article" date="2003" name="Nature">
        <title>Global analysis of protein expression in yeast.</title>
        <authorList>
            <person name="Ghaemmaghami S."/>
            <person name="Huh W.-K."/>
            <person name="Bower K."/>
            <person name="Howson R.W."/>
            <person name="Belle A."/>
            <person name="Dephoure N."/>
            <person name="O'Shea E.K."/>
            <person name="Weissman J.S."/>
        </authorList>
    </citation>
    <scope>LEVEL OF PROTEIN EXPRESSION [LARGE SCALE ANALYSIS]</scope>
</reference>
<name>ISR1_YEAST</name>
<sequence>MNSTPPTSPVTRVSDGSFPSISNNSKGFAYRQPQKHKSNFAYSHLVSPVEEPTAKFSEAFQTDYSSKAPVATSEAHLKNDLDVLFTTPRFYSPENLALMFRLSNTVSSLEFLDEFLMGILLAPEMDFLSNPSYSLPSNKLVGQGSYSYVYPISSSASSRCNNDSGVVLKFAKSQHKSKVILQEALTLAYLQYMSPSTNESHIIPFYGLTYITKSHFRRLRSNECVPGLILPKCEMSLYHFNTAVSHKLSLITKRKIWWRLMKQMIDALKSLKTNGIIHGDIKTANILITEMHVLNGGHCKDFDFYLADFTSAFHINQTPTDLNTTVEYCAPELIDSSSDHVPTFESDLYAVGLCLLSFISQHEPYNELQALVSHGSSPGIGSSSIQQSQWLINALLKKDPINLNMLRNDLFQDWKSELALLSRILVDRLPLENLITILDSNYI</sequence>
<feature type="chain" id="PRO_0000086038" description="Serine/threonine-protein kinase ISR1">
    <location>
        <begin position="1"/>
        <end position="443"/>
    </location>
</feature>
<feature type="domain" description="Protein kinase" evidence="1">
    <location>
        <begin position="135"/>
        <end position="415"/>
    </location>
</feature>
<feature type="active site" description="Proton acceptor" evidence="1 2">
    <location>
        <position position="280"/>
    </location>
</feature>
<feature type="binding site" evidence="1">
    <location>
        <begin position="141"/>
        <end position="149"/>
    </location>
    <ligand>
        <name>ATP</name>
        <dbReference type="ChEBI" id="CHEBI:30616"/>
    </ligand>
</feature>
<feature type="binding site" evidence="1">
    <location>
        <position position="169"/>
    </location>
    <ligand>
        <name>ATP</name>
        <dbReference type="ChEBI" id="CHEBI:30616"/>
    </ligand>
</feature>